<feature type="chain" id="PRO_0000112834" description="Auxin-responsive protein IAA3">
    <location>
        <begin position="1"/>
        <end position="189"/>
    </location>
</feature>
<feature type="domain" description="PB1" evidence="2">
    <location>
        <begin position="92"/>
        <end position="179"/>
    </location>
</feature>
<feature type="region of interest" description="Disordered" evidence="3">
    <location>
        <begin position="42"/>
        <end position="65"/>
    </location>
</feature>
<feature type="short sequence motif" description="EAR-like (transcriptional repression)">
    <location>
        <begin position="12"/>
        <end position="16"/>
    </location>
</feature>
<feature type="compositionally biased region" description="Basic and acidic residues" evidence="3">
    <location>
        <begin position="43"/>
        <end position="56"/>
    </location>
</feature>
<feature type="mutagenesis site" description="In shy2-3; gain of function. Affects auxin-related developmental processes. Affects photomorphogenesis." evidence="15">
    <original>G</original>
    <variation>E</variation>
    <location>
        <position position="67"/>
    </location>
</feature>
<feature type="mutagenesis site" description="In shy2-2; gain of function. Affects auxin-related developmental processes. Affects photomorphogenesis." evidence="15">
    <original>P</original>
    <variation>S</variation>
    <location>
        <position position="69"/>
    </location>
</feature>
<keyword id="KW-0927">Auxin signaling pathway</keyword>
<keyword id="KW-0539">Nucleus</keyword>
<keyword id="KW-0597">Phosphoprotein</keyword>
<keyword id="KW-1185">Reference proteome</keyword>
<keyword id="KW-0678">Repressor</keyword>
<keyword id="KW-0804">Transcription</keyword>
<keyword id="KW-0805">Transcription regulation</keyword>
<protein>
    <recommendedName>
        <fullName>Auxin-responsive protein IAA3</fullName>
    </recommendedName>
    <alternativeName>
        <fullName>Indoleacetic acid-induced protein 3</fullName>
    </alternativeName>
    <alternativeName>
        <fullName>Short hypocotyl</fullName>
    </alternativeName>
    <alternativeName>
        <fullName>Suppressor of HY2</fullName>
    </alternativeName>
</protein>
<comment type="function">
    <text evidence="5 6 8 10 11 12 13 15">Aux/IAA proteins are short-lived transcriptional factors that function as repressors of early auxin response genes at low auxin concentrations. Repression is thought to result from the interaction with auxin response factors (ARFs), proteins that bind to the auxin-responsive promoter element (AuxRE). Plays a central role in auxin regulation of root growth, in gravitropism, and in lateral root formation (PubMed:9895319). Regulated by an auxin-induced protein turnover (PubMed:14617065). Formation of heterodimers with ARF proteins may alter their ability to modulate early auxin response genes expression. When activated by cytokinin, restricts the expression of the PIN genes to the vascular transition zone (PubMed:19039136). Induction of SHY2 in the vascular transition zone restricts BRX expression to down-regulate PIN3 and thus limit meristem growth, but proper SHY2 expression requires BRX (PubMed:21149702). Involved in meristem growth and in determining its size (PubMed:20605455). May participate in strigolactone signaling to regulate meristem size and lateral root formation (PubMed:23425316).</text>
</comment>
<comment type="subunit">
    <text evidence="1 8 9">Homodimers and heterodimers (By similarity). Interacts with TPL (PubMed:18258861). Interacts with TIR1, the F-box component of the Skp1-Cdc53/cullin-F-box (SCFTIR1) E3 ubiquitin ligase complex (PubMed:14617065).</text>
</comment>
<comment type="interaction">
    <interactant intactId="EBI-307174">
        <id>Q38822</id>
    </interactant>
    <interactant intactId="EBI-529887">
        <id>Q8RYC8</id>
        <label>ARF19</label>
    </interactant>
    <organismsDiffer>false</organismsDiffer>
    <experiments>4</experiments>
</comment>
<comment type="interaction">
    <interactant intactId="EBI-307174">
        <id>Q38822</id>
    </interactant>
    <interactant intactId="EBI-632284">
        <id>P93022</id>
        <label>ARF7</label>
    </interactant>
    <organismsDiffer>false</organismsDiffer>
    <experiments>2</experiments>
</comment>
<comment type="interaction">
    <interactant intactId="EBI-307174">
        <id>Q38822</id>
    </interactant>
    <interactant intactId="EBI-1100737">
        <id>Q8L9Y3</id>
        <label>ARR14</label>
    </interactant>
    <organismsDiffer>false</organismsDiffer>
    <experiments>3</experiments>
</comment>
<comment type="interaction">
    <interactant intactId="EBI-307174">
        <id>Q38822</id>
    </interactant>
    <interactant intactId="EBI-4447439">
        <id>O80533</id>
        <label>At1g09500</label>
    </interactant>
    <organismsDiffer>false</organismsDiffer>
    <experiments>4</experiments>
</comment>
<comment type="interaction">
    <interactant intactId="EBI-307174">
        <id>Q38822</id>
    </interactant>
    <interactant intactId="EBI-25520864">
        <id>A0A384L1A6</id>
        <label>At5g52547</label>
    </interactant>
    <organismsDiffer>false</organismsDiffer>
    <experiments>3</experiments>
</comment>
<comment type="interaction">
    <interactant intactId="EBI-307174">
        <id>Q38822</id>
    </interactant>
    <interactant intactId="EBI-15192745">
        <id>Q9LST3</id>
        <label>At5g60142</label>
    </interactant>
    <organismsDiffer>false</organismsDiffer>
    <experiments>3</experiments>
</comment>
<comment type="interaction">
    <interactant intactId="EBI-307174">
        <id>Q38822</id>
    </interactant>
    <interactant intactId="EBI-630505">
        <id>P49677</id>
        <label>IAA1</label>
    </interactant>
    <organismsDiffer>false</organismsDiffer>
    <experiments>13</experiments>
</comment>
<comment type="interaction">
    <interactant intactId="EBI-307174">
        <id>Q38822</id>
    </interactant>
    <interactant intactId="EBI-3946434">
        <id>Q38828</id>
        <label>IAA10</label>
    </interactant>
    <organismsDiffer>false</organismsDiffer>
    <experiments>10</experiments>
</comment>
<comment type="interaction">
    <interactant intactId="EBI-307174">
        <id>Q38822</id>
    </interactant>
    <interactant intactId="EBI-2367923">
        <id>Q38829</id>
        <label>IAA11</label>
    </interactant>
    <organismsDiffer>false</organismsDiffer>
    <experiments>7</experiments>
</comment>
<comment type="interaction">
    <interactant intactId="EBI-307174">
        <id>Q38822</id>
    </interactant>
    <interactant intactId="EBI-617608">
        <id>Q38830</id>
        <label>IAA12</label>
    </interactant>
    <organismsDiffer>false</organismsDiffer>
    <experiments>8</experiments>
</comment>
<comment type="interaction">
    <interactant intactId="EBI-307174">
        <id>Q38822</id>
    </interactant>
    <interactant intactId="EBI-1554143">
        <id>Q38831</id>
        <label>IAA13</label>
    </interactant>
    <organismsDiffer>false</organismsDiffer>
    <experiments>9</experiments>
</comment>
<comment type="interaction">
    <interactant intactId="EBI-307174">
        <id>Q38822</id>
    </interactant>
    <interactant intactId="EBI-2295562">
        <id>Q38832</id>
        <label>IAA14</label>
    </interactant>
    <organismsDiffer>false</organismsDiffer>
    <experiments>4</experiments>
</comment>
<comment type="interaction">
    <interactant intactId="EBI-307174">
        <id>Q38822</id>
    </interactant>
    <interactant intactId="EBI-25524519">
        <id>A0A2H1ZEF6</id>
        <label>IAA15</label>
    </interactant>
    <organismsDiffer>false</organismsDiffer>
    <experiments>5</experiments>
</comment>
<comment type="interaction">
    <interactant intactId="EBI-307174">
        <id>Q38822</id>
    </interactant>
    <interactant intactId="EBI-632231">
        <id>O24407</id>
        <label>IAA16</label>
    </interactant>
    <organismsDiffer>false</organismsDiffer>
    <experiments>12</experiments>
</comment>
<comment type="interaction">
    <interactant intactId="EBI-307174">
        <id>Q38822</id>
    </interactant>
    <interactant intactId="EBI-632243">
        <id>P93830</id>
        <label>IAA17</label>
    </interactant>
    <organismsDiffer>false</organismsDiffer>
    <experiments>14</experiments>
</comment>
<comment type="interaction">
    <interactant intactId="EBI-307174">
        <id>Q38822</id>
    </interactant>
    <interactant intactId="EBI-2295525">
        <id>O24408</id>
        <label>IAA18</label>
    </interactant>
    <organismsDiffer>false</organismsDiffer>
    <experiments>7</experiments>
</comment>
<comment type="interaction">
    <interactant intactId="EBI-307174">
        <id>Q38822</id>
    </interactant>
    <interactant intactId="EBI-632257">
        <id>O24409</id>
        <label>IAA19</label>
    </interactant>
    <organismsDiffer>false</organismsDiffer>
    <experiments>11</experiments>
</comment>
<comment type="interaction">
    <interactant intactId="EBI-307174">
        <id>Q38822</id>
    </interactant>
    <interactant intactId="EBI-632343">
        <id>P49678</id>
        <label>IAA2</label>
    </interactant>
    <organismsDiffer>false</organismsDiffer>
    <experiments>12</experiments>
</comment>
<comment type="interaction">
    <interactant intactId="EBI-307174">
        <id>Q38822</id>
    </interactant>
    <interactant intactId="EBI-632272">
        <id>O24410</id>
        <label>IAA20</label>
    </interactant>
    <organismsDiffer>false</organismsDiffer>
    <experiments>6</experiments>
</comment>
<comment type="interaction">
    <interactant intactId="EBI-307174">
        <id>Q38822</id>
    </interactant>
    <interactant intactId="EBI-3947418">
        <id>Q8LAL2</id>
        <label>IAA26</label>
    </interactant>
    <organismsDiffer>false</organismsDiffer>
    <experiments>9</experiments>
</comment>
<comment type="interaction">
    <interactant intactId="EBI-307174">
        <id>Q38822</id>
    </interactant>
    <interactant intactId="EBI-3946677">
        <id>Q9ZSY8</id>
        <label>IAA27</label>
    </interactant>
    <organismsDiffer>false</organismsDiffer>
    <experiments>9</experiments>
</comment>
<comment type="interaction">
    <interactant intactId="EBI-307174">
        <id>Q38822</id>
    </interactant>
    <interactant intactId="EBI-3133404">
        <id>Q9XFM0</id>
        <label>IAA28</label>
    </interactant>
    <organismsDiffer>false</organismsDiffer>
    <experiments>10</experiments>
</comment>
<comment type="interaction">
    <interactant intactId="EBI-307174">
        <id>Q38822</id>
    </interactant>
    <interactant intactId="EBI-307174">
        <id>Q38822</id>
        <label>IAA3</label>
    </interactant>
    <organismsDiffer>false</organismsDiffer>
    <experiments>4</experiments>
</comment>
<comment type="interaction">
    <interactant intactId="EBI-307174">
        <id>Q38822</id>
    </interactant>
    <interactant intactId="EBI-3946408">
        <id>Q8H174</id>
        <label>IAA31</label>
    </interactant>
    <organismsDiffer>false</organismsDiffer>
    <experiments>10</experiments>
</comment>
<comment type="interaction">
    <interactant intactId="EBI-307174">
        <id>Q38822</id>
    </interactant>
    <interactant intactId="EBI-3946448">
        <id>Q8RYC6</id>
        <label>IAA32</label>
    </interactant>
    <organismsDiffer>false</organismsDiffer>
    <experiments>5</experiments>
</comment>
<comment type="interaction">
    <interactant intactId="EBI-307174">
        <id>Q38822</id>
    </interactant>
    <interactant intactId="EBI-3946739">
        <id>Q9FKM7</id>
        <label>IAA33</label>
    </interactant>
    <organismsDiffer>false</organismsDiffer>
    <experiments>3</experiments>
</comment>
<comment type="interaction">
    <interactant intactId="EBI-307174">
        <id>Q38822</id>
    </interactant>
    <interactant intactId="EBI-3946459">
        <id>Q9C5X0</id>
        <label>IAA34</label>
    </interactant>
    <organismsDiffer>false</organismsDiffer>
    <experiments>9</experiments>
</comment>
<comment type="interaction">
    <interactant intactId="EBI-307174">
        <id>Q38822</id>
    </interactant>
    <interactant intactId="EBI-632187">
        <id>P33077</id>
        <label>IAA4</label>
    </interactant>
    <organismsDiffer>false</organismsDiffer>
    <experiments>9</experiments>
</comment>
<comment type="interaction">
    <interactant intactId="EBI-307174">
        <id>Q38822</id>
    </interactant>
    <interactant intactId="EBI-3946487">
        <id>P33078</id>
        <label>IAA5</label>
    </interactant>
    <organismsDiffer>false</organismsDiffer>
    <experiments>6</experiments>
</comment>
<comment type="interaction">
    <interactant intactId="EBI-307174">
        <id>Q38822</id>
    </interactant>
    <interactant intactId="EBI-1554124">
        <id>Q38824</id>
        <label>IAA6</label>
    </interactant>
    <organismsDiffer>false</organismsDiffer>
    <experiments>8</experiments>
</comment>
<comment type="interaction">
    <interactant intactId="EBI-307174">
        <id>Q38822</id>
    </interactant>
    <interactant intactId="EBI-602959">
        <id>Q38825</id>
        <label>IAA7</label>
    </interactant>
    <organismsDiffer>false</organismsDiffer>
    <experiments>6</experiments>
</comment>
<comment type="interaction">
    <interactant intactId="EBI-307174">
        <id>Q38822</id>
    </interactant>
    <interactant intactId="EBI-632200">
        <id>Q38826</id>
        <label>IAA8</label>
    </interactant>
    <organismsDiffer>false</organismsDiffer>
    <experiments>7</experiments>
</comment>
<comment type="interaction">
    <interactant intactId="EBI-307174">
        <id>Q38822</id>
    </interactant>
    <interactant intactId="EBI-632216">
        <id>Q38827</id>
        <label>IAA9</label>
    </interactant>
    <organismsDiffer>false</organismsDiffer>
    <experiments>4</experiments>
</comment>
<comment type="interaction">
    <interactant intactId="EBI-307174">
        <id>Q38822</id>
    </interactant>
    <interactant intactId="EBI-1644689">
        <id>O04294</id>
        <label>IMPA3</label>
    </interactant>
    <organismsDiffer>false</organismsDiffer>
    <experiments>3</experiments>
</comment>
<comment type="interaction">
    <interactant intactId="EBI-307174">
        <id>Q38822</id>
    </interactant>
    <interactant intactId="EBI-1238013">
        <id>O22179</id>
        <label>MYB70</label>
    </interactant>
    <organismsDiffer>false</organismsDiffer>
    <experiments>3</experiments>
</comment>
<comment type="interaction">
    <interactant intactId="EBI-307174">
        <id>Q38822</id>
    </interactant>
    <interactant intactId="EBI-25506855">
        <id>O23160</id>
        <label>MYB73</label>
    </interactant>
    <organismsDiffer>false</organismsDiffer>
    <experiments>3</experiments>
</comment>
<comment type="interaction">
    <interactant intactId="EBI-307174">
        <id>Q38822</id>
    </interactant>
    <interactant intactId="EBI-963647">
        <id>Q9C8Y3</id>
        <label>RGL1</label>
    </interactant>
    <organismsDiffer>false</organismsDiffer>
    <experiments>3</experiments>
</comment>
<comment type="interaction">
    <interactant intactId="EBI-307174">
        <id>Q38822</id>
    </interactant>
    <interactant intactId="EBI-4426144">
        <id>Q9C9L2</id>
        <label>TCP15</label>
    </interactant>
    <organismsDiffer>false</organismsDiffer>
    <experiments>3</experiments>
</comment>
<comment type="interaction">
    <interactant intactId="EBI-307174">
        <id>Q38822</id>
    </interactant>
    <interactant intactId="EBI-25522447">
        <id>Q9MAH8</id>
        <label>TCP3</label>
    </interactant>
    <organismsDiffer>false</organismsDiffer>
    <experiments>3</experiments>
</comment>
<comment type="interaction">
    <interactant intactId="EBI-307174">
        <id>Q38822</id>
    </interactant>
    <interactant intactId="EBI-4426557">
        <id>Q84MB2</id>
        <label>TIFY8</label>
    </interactant>
    <organismsDiffer>false</organismsDiffer>
    <experiments>3</experiments>
</comment>
<comment type="interaction">
    <interactant intactId="EBI-307174">
        <id>Q38822</id>
    </interactant>
    <interactant intactId="EBI-307183">
        <id>Q570C0</id>
        <label>TIR1</label>
    </interactant>
    <organismsDiffer>false</organismsDiffer>
    <experiments>3</experiments>
</comment>
<comment type="subcellular location">
    <subcellularLocation>
        <location evidence="1">Nucleus</location>
    </subcellularLocation>
</comment>
<comment type="tissue specificity">
    <text evidence="5 7 10 14">Highly expressed in stems and flowers (PubMed:7658471). Expressed in hypocotyls, cotyledons and leaves, but barely detected in roots (PubMed:11884676). Expressed in root tips (PubMed:14534134). In the root meristem, specifically detected at the vascular tissue transition zone (PubMed:19039136).</text>
</comment>
<comment type="developmental stage">
    <text evidence="11">The level of expression increases during meristem growth, reaches a maximum at 5 days post germination and subsequently remaines constant in time.</text>
</comment>
<comment type="induction">
    <text evidence="5 10 14">By auxin (PubMed:7658471). Up-regulated by cytokinin treatment through the primary cytokinin-response transcription factor ARR1 (PubMed:19039136). Down-regulated by light in the presence of sucrose, but up-regulated in the absence of sucrose (PubMed:11884676).</text>
</comment>
<comment type="domain">
    <text>The N-terminal half of the protein contains two conserved domains I and II. Domain I includes a slightly degenerated ERF-associated amphiphilic repression (EAR) motif which seems to be involved in the activity of transcriptional repression. Domain II is required for the correct degradation of the protein through the SCF-mediated ubiquitin-proteasome pathway. Interactions between Aux/IAA proteins and auxin response factors (ARFs) occur through their C-terminal dimerization domains III and IV.</text>
</comment>
<comment type="PTM">
    <text evidence="4">Phosphorylated by phytochrome A in vitro.</text>
</comment>
<comment type="similarity">
    <text evidence="16">Belongs to the Aux/IAA family.</text>
</comment>
<gene>
    <name type="primary">IAA3</name>
    <name type="synonym">SHY2</name>
    <name type="ordered locus">At1g04240</name>
    <name type="ORF">F19P19.32</name>
</gene>
<sequence length="189" mass="21520">MDEFVNLKETELRLGLPGTDNVCEAKERVSCCNNNNKRVLSTDTEKEIESSSRKTETSPPRKAQIVGWPPVRSYRKNNIQSKKNESEHEGQGIYVKVSMDGAPYLRKIDLSCYKGYSELLKALEVMFKFSVGEYFERDGYKGSDFVPTYEDKDGDWMLIGDVPWEMFICTCKRLRIMKGSEAKGLGCGV</sequence>
<accession>Q38822</accession>
<accession>O04741</accession>
<name>IAA3_ARATH</name>
<evidence type="ECO:0000250" key="1"/>
<evidence type="ECO:0000255" key="2">
    <source>
        <dbReference type="PROSITE-ProRule" id="PRU01081"/>
    </source>
</evidence>
<evidence type="ECO:0000256" key="3">
    <source>
        <dbReference type="SAM" id="MobiDB-lite"/>
    </source>
</evidence>
<evidence type="ECO:0000269" key="4">
    <source>
    </source>
</evidence>
<evidence type="ECO:0000269" key="5">
    <source>
    </source>
</evidence>
<evidence type="ECO:0000269" key="6">
    <source>
    </source>
</evidence>
<evidence type="ECO:0000269" key="7">
    <source>
    </source>
</evidence>
<evidence type="ECO:0000269" key="8">
    <source>
    </source>
</evidence>
<evidence type="ECO:0000269" key="9">
    <source>
    </source>
</evidence>
<evidence type="ECO:0000269" key="10">
    <source>
    </source>
</evidence>
<evidence type="ECO:0000269" key="11">
    <source>
    </source>
</evidence>
<evidence type="ECO:0000269" key="12">
    <source>
    </source>
</evidence>
<evidence type="ECO:0000269" key="13">
    <source>
    </source>
</evidence>
<evidence type="ECO:0000269" key="14">
    <source>
    </source>
</evidence>
<evidence type="ECO:0000269" key="15">
    <source>
    </source>
</evidence>
<evidence type="ECO:0000305" key="16"/>
<reference key="1">
    <citation type="journal article" date="1995" name="J. Mol. Biol.">
        <title>The PS-IAA4/5-like family of early auxin-inducible mRNAs in Arabidopsis thaliana.</title>
        <authorList>
            <person name="Abel S."/>
            <person name="Nguyen M.D."/>
            <person name="Theologis A."/>
        </authorList>
    </citation>
    <scope>NUCLEOTIDE SEQUENCE [MRNA]</scope>
    <scope>TISSUE SPECIFICITY</scope>
    <scope>INDUCTION</scope>
    <source>
        <strain>cv. Columbia</strain>
    </source>
</reference>
<reference key="2">
    <citation type="journal article" date="2000" name="Nature">
        <title>Sequence and analysis of chromosome 1 of the plant Arabidopsis thaliana.</title>
        <authorList>
            <person name="Theologis A."/>
            <person name="Ecker J.R."/>
            <person name="Palm C.J."/>
            <person name="Federspiel N.A."/>
            <person name="Kaul S."/>
            <person name="White O."/>
            <person name="Alonso J."/>
            <person name="Altafi H."/>
            <person name="Araujo R."/>
            <person name="Bowman C.L."/>
            <person name="Brooks S.Y."/>
            <person name="Buehler E."/>
            <person name="Chan A."/>
            <person name="Chao Q."/>
            <person name="Chen H."/>
            <person name="Cheuk R.F."/>
            <person name="Chin C.W."/>
            <person name="Chung M.K."/>
            <person name="Conn L."/>
            <person name="Conway A.B."/>
            <person name="Conway A.R."/>
            <person name="Creasy T.H."/>
            <person name="Dewar K."/>
            <person name="Dunn P."/>
            <person name="Etgu P."/>
            <person name="Feldblyum T.V."/>
            <person name="Feng J.-D."/>
            <person name="Fong B."/>
            <person name="Fujii C.Y."/>
            <person name="Gill J.E."/>
            <person name="Goldsmith A.D."/>
            <person name="Haas B."/>
            <person name="Hansen N.F."/>
            <person name="Hughes B."/>
            <person name="Huizar L."/>
            <person name="Hunter J.L."/>
            <person name="Jenkins J."/>
            <person name="Johnson-Hopson C."/>
            <person name="Khan S."/>
            <person name="Khaykin E."/>
            <person name="Kim C.J."/>
            <person name="Koo H.L."/>
            <person name="Kremenetskaia I."/>
            <person name="Kurtz D.B."/>
            <person name="Kwan A."/>
            <person name="Lam B."/>
            <person name="Langin-Hooper S."/>
            <person name="Lee A."/>
            <person name="Lee J.M."/>
            <person name="Lenz C.A."/>
            <person name="Li J.H."/>
            <person name="Li Y.-P."/>
            <person name="Lin X."/>
            <person name="Liu S.X."/>
            <person name="Liu Z.A."/>
            <person name="Luros J.S."/>
            <person name="Maiti R."/>
            <person name="Marziali A."/>
            <person name="Militscher J."/>
            <person name="Miranda M."/>
            <person name="Nguyen M."/>
            <person name="Nierman W.C."/>
            <person name="Osborne B.I."/>
            <person name="Pai G."/>
            <person name="Peterson J."/>
            <person name="Pham P.K."/>
            <person name="Rizzo M."/>
            <person name="Rooney T."/>
            <person name="Rowley D."/>
            <person name="Sakano H."/>
            <person name="Salzberg S.L."/>
            <person name="Schwartz J.R."/>
            <person name="Shinn P."/>
            <person name="Southwick A.M."/>
            <person name="Sun H."/>
            <person name="Tallon L.J."/>
            <person name="Tambunga G."/>
            <person name="Toriumi M.J."/>
            <person name="Town C.D."/>
            <person name="Utterback T."/>
            <person name="Van Aken S."/>
            <person name="Vaysberg M."/>
            <person name="Vysotskaia V.S."/>
            <person name="Walker M."/>
            <person name="Wu D."/>
            <person name="Yu G."/>
            <person name="Fraser C.M."/>
            <person name="Venter J.C."/>
            <person name="Davis R.W."/>
        </authorList>
    </citation>
    <scope>NUCLEOTIDE SEQUENCE [LARGE SCALE GENOMIC DNA]</scope>
    <source>
        <strain>cv. Columbia</strain>
    </source>
</reference>
<reference key="3">
    <citation type="journal article" date="2017" name="Plant J.">
        <title>Araport11: a complete reannotation of the Arabidopsis thaliana reference genome.</title>
        <authorList>
            <person name="Cheng C.Y."/>
            <person name="Krishnakumar V."/>
            <person name="Chan A.P."/>
            <person name="Thibaud-Nissen F."/>
            <person name="Schobel S."/>
            <person name="Town C.D."/>
        </authorList>
    </citation>
    <scope>GENOME REANNOTATION</scope>
    <source>
        <strain>cv. Columbia</strain>
    </source>
</reference>
<reference key="4">
    <citation type="journal article" date="2003" name="Science">
        <title>Empirical analysis of transcriptional activity in the Arabidopsis genome.</title>
        <authorList>
            <person name="Yamada K."/>
            <person name="Lim J."/>
            <person name="Dale J.M."/>
            <person name="Chen H."/>
            <person name="Shinn P."/>
            <person name="Palm C.J."/>
            <person name="Southwick A.M."/>
            <person name="Wu H.C."/>
            <person name="Kim C.J."/>
            <person name="Nguyen M."/>
            <person name="Pham P.K."/>
            <person name="Cheuk R.F."/>
            <person name="Karlin-Newmann G."/>
            <person name="Liu S.X."/>
            <person name="Lam B."/>
            <person name="Sakano H."/>
            <person name="Wu T."/>
            <person name="Yu G."/>
            <person name="Miranda M."/>
            <person name="Quach H.L."/>
            <person name="Tripp M."/>
            <person name="Chang C.H."/>
            <person name="Lee J.M."/>
            <person name="Toriumi M.J."/>
            <person name="Chan M.M."/>
            <person name="Tang C.C."/>
            <person name="Onodera C.S."/>
            <person name="Deng J.M."/>
            <person name="Akiyama K."/>
            <person name="Ansari Y."/>
            <person name="Arakawa T."/>
            <person name="Banh J."/>
            <person name="Banno F."/>
            <person name="Bowser L."/>
            <person name="Brooks S.Y."/>
            <person name="Carninci P."/>
            <person name="Chao Q."/>
            <person name="Choy N."/>
            <person name="Enju A."/>
            <person name="Goldsmith A.D."/>
            <person name="Gurjal M."/>
            <person name="Hansen N.F."/>
            <person name="Hayashizaki Y."/>
            <person name="Johnson-Hopson C."/>
            <person name="Hsuan V.W."/>
            <person name="Iida K."/>
            <person name="Karnes M."/>
            <person name="Khan S."/>
            <person name="Koesema E."/>
            <person name="Ishida J."/>
            <person name="Jiang P.X."/>
            <person name="Jones T."/>
            <person name="Kawai J."/>
            <person name="Kamiya A."/>
            <person name="Meyers C."/>
            <person name="Nakajima M."/>
            <person name="Narusaka M."/>
            <person name="Seki M."/>
            <person name="Sakurai T."/>
            <person name="Satou M."/>
            <person name="Tamse R."/>
            <person name="Vaysberg M."/>
            <person name="Wallender E.K."/>
            <person name="Wong C."/>
            <person name="Yamamura Y."/>
            <person name="Yuan S."/>
            <person name="Shinozaki K."/>
            <person name="Davis R.W."/>
            <person name="Theologis A."/>
            <person name="Ecker J.R."/>
        </authorList>
    </citation>
    <scope>NUCLEOTIDE SEQUENCE [LARGE SCALE MRNA]</scope>
    <source>
        <strain>cv. Columbia</strain>
    </source>
</reference>
<reference key="5">
    <citation type="journal article" date="1999" name="Development">
        <title>Control of auxin-regulated root development by the Arabidopsis thaliana SHY2/IAA3 gene.</title>
        <authorList>
            <person name="Tian Q."/>
            <person name="Reed J.W."/>
        </authorList>
    </citation>
    <scope>FUNCTION</scope>
    <scope>MUTAGENESIS OF GLY-67 AND PRO-69</scope>
</reference>
<reference key="6">
    <citation type="journal article" date="2000" name="Plant Physiol.">
        <title>Aux/IAA proteins are phosphorylated by phytochrome in vitro.</title>
        <authorList>
            <person name="Colon-Carmona A."/>
            <person name="Chen D.L."/>
            <person name="Yeh K.-C."/>
            <person name="Abel S."/>
        </authorList>
    </citation>
    <scope>PHOSPHORYLATION BY PHYTOCHROME A</scope>
</reference>
<reference key="7">
    <citation type="journal article" date="2002" name="Plant Cell">
        <title>Arabidopsis SHY2/IAA3 inhibits auxin-regulated gene expression.</title>
        <authorList>
            <person name="Tian Q."/>
            <person name="Uhlir N.J."/>
            <person name="Reed J.W."/>
        </authorList>
    </citation>
    <scope>FUNCTION</scope>
    <scope>TISSUE SPECIFICITY</scope>
    <scope>INDUCTION BY LIGHT</scope>
</reference>
<reference key="8">
    <citation type="journal article" date="2002" name="Plant Mol. Biol.">
        <title>Genetics of Aux/IAA and ARF action in plant growth and development.</title>
        <authorList>
            <person name="Liscum E."/>
            <person name="Reed J.W."/>
        </authorList>
    </citation>
    <scope>GENE FAMILY</scope>
    <scope>NOMENCLATURE</scope>
    <scope>FUNCTION</scope>
</reference>
<reference key="9">
    <citation type="journal article" date="2003" name="Development">
        <title>AXR3 and SHY2 interact to regulate root hair development.</title>
        <authorList>
            <person name="Knox K."/>
            <person name="Grierson C.S."/>
            <person name="Leyser O."/>
        </authorList>
    </citation>
    <scope>TISSUE SPECIFICITY</scope>
</reference>
<reference key="10">
    <citation type="journal article" date="2003" name="Plant J.">
        <title>Regulation of Arabidopsis SHY2/IAA3 protein turnover.</title>
        <authorList>
            <person name="Tian Q."/>
            <person name="Nagpal P."/>
            <person name="Reed J.W."/>
        </authorList>
    </citation>
    <scope>INTERACTION WITH TIR1</scope>
</reference>
<reference key="11">
    <citation type="journal article" date="2004" name="Plant Cell">
        <title>Aux/IAA proteins contain a potent transcriptional repression domain.</title>
        <authorList>
            <person name="Tiwari S.B."/>
            <person name="Hagen G."/>
            <person name="Guilfoyle T.J."/>
        </authorList>
    </citation>
    <scope>TRANSCRIPTIONAL REPRESSION DOMAIN</scope>
</reference>
<reference key="12">
    <citation type="journal article" date="2008" name="Science">
        <title>TOPLESS mediates auxin-dependent transcriptional repression during Arabidopsis embryogenesis.</title>
        <authorList>
            <person name="Szemenyei H."/>
            <person name="Hannon M."/>
            <person name="Long J.A."/>
        </authorList>
    </citation>
    <scope>INTERACTION WITH TPL</scope>
</reference>
<reference key="13">
    <citation type="journal article" date="2008" name="Science">
        <title>A genetic framework for the control of cell division and differentiation in the root meristem.</title>
        <authorList>
            <person name="Dello Ioio R."/>
            <person name="Nakamura K."/>
            <person name="Moubayidin L."/>
            <person name="Perilli S."/>
            <person name="Taniguchi M."/>
            <person name="Morita M.T."/>
            <person name="Aoyama T."/>
            <person name="Costantino P."/>
            <person name="Sabatini S."/>
        </authorList>
    </citation>
    <scope>INDUCTION BY ARR1</scope>
    <scope>TISSUE SPECIFICITY</scope>
    <scope>INDUCTION BY CYTOKININ</scope>
</reference>
<reference key="14">
    <citation type="journal article" date="2010" name="Curr. Biol.">
        <title>The rate of cell differentiation controls the Arabidopsis root meristem growth phase.</title>
        <authorList>
            <person name="Moubayidin L."/>
            <person name="Perilli S."/>
            <person name="Dello Ioio R."/>
            <person name="Di Mambro R."/>
            <person name="Costantino P."/>
            <person name="Sabatini S."/>
        </authorList>
    </citation>
    <scope>FUNCTION</scope>
    <scope>DEVELOPMENTAL STAGE</scope>
</reference>
<reference key="15">
    <citation type="journal article" date="2010" name="Proc. Natl. Acad. Sci. U.S.A.">
        <title>Spatio-temporal sequence of cross-regulatory events in root meristem growth.</title>
        <authorList>
            <person name="Scacchi E."/>
            <person name="Salinas P."/>
            <person name="Gujas B."/>
            <person name="Santuari L."/>
            <person name="Krogan N."/>
            <person name="Ragni L."/>
            <person name="Berleth T."/>
            <person name="Hardtke C.S."/>
        </authorList>
    </citation>
    <scope>FUNCTION</scope>
</reference>
<reference key="16">
    <citation type="journal article" date="2013" name="New Phytol.">
        <title>Strigolactone signaling in the endodermis is sufficient to restore root responses and involves SHORT HYPOCOTYL 2 (SHY2) activity.</title>
        <authorList>
            <person name="Koren D."/>
            <person name="Resnick N."/>
            <person name="Mayzlish Gati E."/>
            <person name="Belausov E."/>
            <person name="Weininger S."/>
            <person name="Kapulnik Y."/>
            <person name="Koltai H."/>
        </authorList>
    </citation>
    <scope>FUNCTION</scope>
</reference>
<proteinExistence type="evidence at protein level"/>
<dbReference type="EMBL" id="U18406">
    <property type="protein sequence ID" value="AAC49045.1"/>
    <property type="molecule type" value="mRNA"/>
</dbReference>
<dbReference type="EMBL" id="AC000104">
    <property type="protein sequence ID" value="AAB70452.1"/>
    <property type="molecule type" value="Genomic_DNA"/>
</dbReference>
<dbReference type="EMBL" id="CP002684">
    <property type="protein sequence ID" value="AEE27673.1"/>
    <property type="molecule type" value="Genomic_DNA"/>
</dbReference>
<dbReference type="EMBL" id="AF332393">
    <property type="protein sequence ID" value="AAG48757.1"/>
    <property type="molecule type" value="mRNA"/>
</dbReference>
<dbReference type="EMBL" id="AY064007">
    <property type="protein sequence ID" value="AAL36363.1"/>
    <property type="molecule type" value="mRNA"/>
</dbReference>
<dbReference type="PIR" id="S58491">
    <property type="entry name" value="S58491"/>
</dbReference>
<dbReference type="RefSeq" id="NP_171920.1">
    <property type="nucleotide sequence ID" value="NM_100305.4"/>
</dbReference>
<dbReference type="SMR" id="Q38822"/>
<dbReference type="BioGRID" id="24805">
    <property type="interactions" value="65"/>
</dbReference>
<dbReference type="DIP" id="DIP-31741N"/>
<dbReference type="ELM" id="Q38822"/>
<dbReference type="FunCoup" id="Q38822">
    <property type="interactions" value="736"/>
</dbReference>
<dbReference type="IntAct" id="Q38822">
    <property type="interactions" value="74"/>
</dbReference>
<dbReference type="STRING" id="3702.Q38822"/>
<dbReference type="iPTMnet" id="Q38822"/>
<dbReference type="PaxDb" id="3702-AT1G04240.1"/>
<dbReference type="DNASU" id="839570"/>
<dbReference type="EnsemblPlants" id="AT1G04240.1">
    <property type="protein sequence ID" value="AT1G04240.1"/>
    <property type="gene ID" value="AT1G04240"/>
</dbReference>
<dbReference type="GeneID" id="839570"/>
<dbReference type="Gramene" id="AT1G04240.1">
    <property type="protein sequence ID" value="AT1G04240.1"/>
    <property type="gene ID" value="AT1G04240"/>
</dbReference>
<dbReference type="KEGG" id="ath:AT1G04240"/>
<dbReference type="Araport" id="AT1G04240"/>
<dbReference type="TAIR" id="AT1G04240">
    <property type="gene designation" value="SHY2"/>
</dbReference>
<dbReference type="eggNOG" id="ENOG502QU81">
    <property type="taxonomic scope" value="Eukaryota"/>
</dbReference>
<dbReference type="HOGENOM" id="CLU_049393_0_1_1"/>
<dbReference type="InParanoid" id="Q38822"/>
<dbReference type="PhylomeDB" id="Q38822"/>
<dbReference type="PRO" id="PR:Q38822"/>
<dbReference type="Proteomes" id="UP000006548">
    <property type="component" value="Chromosome 1"/>
</dbReference>
<dbReference type="ExpressionAtlas" id="Q38822">
    <property type="expression patterns" value="baseline and differential"/>
</dbReference>
<dbReference type="GO" id="GO:0005634">
    <property type="term" value="C:nucleus"/>
    <property type="evidence" value="ECO:0007669"/>
    <property type="project" value="UniProtKB-SubCell"/>
</dbReference>
<dbReference type="GO" id="GO:0003700">
    <property type="term" value="F:DNA-binding transcription factor activity"/>
    <property type="evidence" value="ECO:0000250"/>
    <property type="project" value="TAIR"/>
</dbReference>
<dbReference type="GO" id="GO:0042802">
    <property type="term" value="F:identical protein binding"/>
    <property type="evidence" value="ECO:0000353"/>
    <property type="project" value="IntAct"/>
</dbReference>
<dbReference type="GO" id="GO:0000976">
    <property type="term" value="F:transcription cis-regulatory region binding"/>
    <property type="evidence" value="ECO:0000353"/>
    <property type="project" value="TAIR"/>
</dbReference>
<dbReference type="GO" id="GO:0009734">
    <property type="term" value="P:auxin-activated signaling pathway"/>
    <property type="evidence" value="ECO:0007669"/>
    <property type="project" value="UniProtKB-KW"/>
</dbReference>
<dbReference type="GO" id="GO:0009733">
    <property type="term" value="P:response to auxin"/>
    <property type="evidence" value="ECO:0000315"/>
    <property type="project" value="TAIR"/>
</dbReference>
<dbReference type="FunFam" id="3.10.20.90:FF:000078">
    <property type="entry name" value="Auxin-responsive protein"/>
    <property type="match status" value="1"/>
</dbReference>
<dbReference type="Gene3D" id="3.10.20.90">
    <property type="entry name" value="Phosphatidylinositol 3-kinase Catalytic Subunit, Chain A, domain 1"/>
    <property type="match status" value="1"/>
</dbReference>
<dbReference type="InterPro" id="IPR033389">
    <property type="entry name" value="AUX/IAA_dom"/>
</dbReference>
<dbReference type="InterPro" id="IPR003311">
    <property type="entry name" value="AUX_IAA"/>
</dbReference>
<dbReference type="InterPro" id="IPR053793">
    <property type="entry name" value="PB1-like"/>
</dbReference>
<dbReference type="PANTHER" id="PTHR31734">
    <property type="entry name" value="AUXIN-RESPONSIVE PROTEIN IAA17"/>
    <property type="match status" value="1"/>
</dbReference>
<dbReference type="PANTHER" id="PTHR31734:SF262">
    <property type="entry name" value="AUXIN-RESPONSIVE PROTEIN IAA3"/>
    <property type="match status" value="1"/>
</dbReference>
<dbReference type="Pfam" id="PF02309">
    <property type="entry name" value="AUX_IAA"/>
    <property type="match status" value="1"/>
</dbReference>
<dbReference type="SUPFAM" id="SSF54277">
    <property type="entry name" value="CAD &amp; PB1 domains"/>
    <property type="match status" value="1"/>
</dbReference>
<dbReference type="PROSITE" id="PS51745">
    <property type="entry name" value="PB1"/>
    <property type="match status" value="1"/>
</dbReference>
<organism>
    <name type="scientific">Arabidopsis thaliana</name>
    <name type="common">Mouse-ear cress</name>
    <dbReference type="NCBI Taxonomy" id="3702"/>
    <lineage>
        <taxon>Eukaryota</taxon>
        <taxon>Viridiplantae</taxon>
        <taxon>Streptophyta</taxon>
        <taxon>Embryophyta</taxon>
        <taxon>Tracheophyta</taxon>
        <taxon>Spermatophyta</taxon>
        <taxon>Magnoliopsida</taxon>
        <taxon>eudicotyledons</taxon>
        <taxon>Gunneridae</taxon>
        <taxon>Pentapetalae</taxon>
        <taxon>rosids</taxon>
        <taxon>malvids</taxon>
        <taxon>Brassicales</taxon>
        <taxon>Brassicaceae</taxon>
        <taxon>Camelineae</taxon>
        <taxon>Arabidopsis</taxon>
    </lineage>
</organism>